<organism>
    <name type="scientific">Clostridium tetani (strain Massachusetts / E88)</name>
    <dbReference type="NCBI Taxonomy" id="212717"/>
    <lineage>
        <taxon>Bacteria</taxon>
        <taxon>Bacillati</taxon>
        <taxon>Bacillota</taxon>
        <taxon>Clostridia</taxon>
        <taxon>Eubacteriales</taxon>
        <taxon>Clostridiaceae</taxon>
        <taxon>Clostridium</taxon>
    </lineage>
</organism>
<reference key="1">
    <citation type="journal article" date="2003" name="Proc. Natl. Acad. Sci. U.S.A.">
        <title>The genome sequence of Clostridium tetani, the causative agent of tetanus disease.</title>
        <authorList>
            <person name="Brueggemann H."/>
            <person name="Baeumer S."/>
            <person name="Fricke W.F."/>
            <person name="Wiezer A."/>
            <person name="Liesegang H."/>
            <person name="Decker I."/>
            <person name="Herzberg C."/>
            <person name="Martinez-Arias R."/>
            <person name="Merkl R."/>
            <person name="Henne A."/>
            <person name="Gottschalk G."/>
        </authorList>
    </citation>
    <scope>NUCLEOTIDE SEQUENCE [LARGE SCALE GENOMIC DNA]</scope>
    <source>
        <strain>Massachusetts / E88</strain>
    </source>
</reference>
<comment type="function">
    <text evidence="1">DNA-binding global transcriptional regulator which is involved in the adaptive response to starvation and acts by directly or indirectly controlling the expression of numerous genes in response to nutrient availability. During rapid exponential growth, CodY is highly active and represses genes whose products allow adaptation to nutrient depletion.</text>
</comment>
<comment type="subcellular location">
    <subcellularLocation>
        <location evidence="1">Cytoplasm</location>
    </subcellularLocation>
</comment>
<comment type="similarity">
    <text evidence="1">Belongs to the CodY family.</text>
</comment>
<sequence length="258" mass="28732">MSSLLEKTRQLNKILQKSGAEPVVFDDICNLLSEVLSCNVYIISKKGKILGYDLSTGFECQTVRDKVVPEKRFPEHYNNKLLNVHGTKSNLENQGECVFESGEDCGVKNKLTTIVPINGNRERLGTLLLARFDVPFTDDDLIISEYSATIIGLEILRSKQDEIEEEARKKAVVQLAIGTLSYSELEAVEHIFNELDGPEGLLVASKIADKVGITRSVIVNALRKFESAGVIESRSLGMKGTHIKILNDRLLEELKKIK</sequence>
<feature type="chain" id="PRO_0000213224" description="Global transcriptional regulator CodY">
    <location>
        <begin position="1"/>
        <end position="258"/>
    </location>
</feature>
<feature type="DNA-binding region" description="H-T-H motif" evidence="1">
    <location>
        <begin position="204"/>
        <end position="223"/>
    </location>
</feature>
<feature type="region of interest" description="GAF domain" evidence="1">
    <location>
        <begin position="1"/>
        <end position="156"/>
    </location>
</feature>
<accession>Q895L3</accession>
<evidence type="ECO:0000255" key="1">
    <source>
        <dbReference type="HAMAP-Rule" id="MF_00621"/>
    </source>
</evidence>
<gene>
    <name evidence="1" type="primary">codY</name>
    <name type="ordered locus">CTC_01260</name>
</gene>
<dbReference type="EMBL" id="AE015927">
    <property type="protein sequence ID" value="AAO35827.1"/>
    <property type="molecule type" value="Genomic_DNA"/>
</dbReference>
<dbReference type="RefSeq" id="WP_011099489.1">
    <property type="nucleotide sequence ID" value="NC_004557.1"/>
</dbReference>
<dbReference type="SMR" id="Q895L3"/>
<dbReference type="STRING" id="212717.CTC_01260"/>
<dbReference type="GeneID" id="24253588"/>
<dbReference type="KEGG" id="ctc:CTC_01260"/>
<dbReference type="HOGENOM" id="CLU_089581_0_0_9"/>
<dbReference type="OrthoDB" id="2056at2"/>
<dbReference type="Proteomes" id="UP000001412">
    <property type="component" value="Chromosome"/>
</dbReference>
<dbReference type="GO" id="GO:0005737">
    <property type="term" value="C:cytoplasm"/>
    <property type="evidence" value="ECO:0007669"/>
    <property type="project" value="UniProtKB-SubCell"/>
</dbReference>
<dbReference type="GO" id="GO:0003677">
    <property type="term" value="F:DNA binding"/>
    <property type="evidence" value="ECO:0007669"/>
    <property type="project" value="UniProtKB-UniRule"/>
</dbReference>
<dbReference type="GO" id="GO:0003700">
    <property type="term" value="F:DNA-binding transcription factor activity"/>
    <property type="evidence" value="ECO:0007669"/>
    <property type="project" value="InterPro"/>
</dbReference>
<dbReference type="GO" id="GO:0005525">
    <property type="term" value="F:GTP binding"/>
    <property type="evidence" value="ECO:0007669"/>
    <property type="project" value="InterPro"/>
</dbReference>
<dbReference type="GO" id="GO:0045892">
    <property type="term" value="P:negative regulation of DNA-templated transcription"/>
    <property type="evidence" value="ECO:0007669"/>
    <property type="project" value="UniProtKB-UniRule"/>
</dbReference>
<dbReference type="FunFam" id="1.10.10.10:FF:000034">
    <property type="entry name" value="GTP-sensing transcriptional pleiotropic repressor CodY"/>
    <property type="match status" value="1"/>
</dbReference>
<dbReference type="Gene3D" id="3.30.450.40">
    <property type="match status" value="1"/>
</dbReference>
<dbReference type="Gene3D" id="1.10.10.10">
    <property type="entry name" value="Winged helix-like DNA-binding domain superfamily/Winged helix DNA-binding domain"/>
    <property type="match status" value="1"/>
</dbReference>
<dbReference type="HAMAP" id="MF_00621">
    <property type="entry name" value="HTH_type_CodY"/>
    <property type="match status" value="1"/>
</dbReference>
<dbReference type="InterPro" id="IPR014154">
    <property type="entry name" value="CodY"/>
</dbReference>
<dbReference type="InterPro" id="IPR029016">
    <property type="entry name" value="GAF-like_dom_sf"/>
</dbReference>
<dbReference type="InterPro" id="IPR013198">
    <property type="entry name" value="GTP_trans_reg_CodY_C"/>
</dbReference>
<dbReference type="InterPro" id="IPR010312">
    <property type="entry name" value="Transc_reg_CodY_N"/>
</dbReference>
<dbReference type="InterPro" id="IPR036388">
    <property type="entry name" value="WH-like_DNA-bd_sf"/>
</dbReference>
<dbReference type="InterPro" id="IPR036390">
    <property type="entry name" value="WH_DNA-bd_sf"/>
</dbReference>
<dbReference type="NCBIfam" id="TIGR02787">
    <property type="entry name" value="codY_Gpos"/>
    <property type="match status" value="1"/>
</dbReference>
<dbReference type="NCBIfam" id="NF003170">
    <property type="entry name" value="PRK04158.1"/>
    <property type="match status" value="1"/>
</dbReference>
<dbReference type="PANTHER" id="PTHR40062:SF1">
    <property type="entry name" value="GLOBAL TRANSCRIPTIONAL REGULATOR CODY"/>
    <property type="match status" value="1"/>
</dbReference>
<dbReference type="PANTHER" id="PTHR40062">
    <property type="entry name" value="GTP-SENSING TRANSCRIPTIONAL PLEIOTROPIC REPRESSOR CODY"/>
    <property type="match status" value="1"/>
</dbReference>
<dbReference type="Pfam" id="PF06018">
    <property type="entry name" value="CodY"/>
    <property type="match status" value="1"/>
</dbReference>
<dbReference type="Pfam" id="PF08222">
    <property type="entry name" value="HTH_CodY"/>
    <property type="match status" value="1"/>
</dbReference>
<dbReference type="PIRSF" id="PIRSF011572">
    <property type="entry name" value="GTP_sensing_CodY"/>
    <property type="match status" value="1"/>
</dbReference>
<dbReference type="SUPFAM" id="SSF46785">
    <property type="entry name" value="Winged helix' DNA-binding domain"/>
    <property type="match status" value="1"/>
</dbReference>
<name>CODY_CLOTE</name>
<proteinExistence type="inferred from homology"/>
<keyword id="KW-0963">Cytoplasm</keyword>
<keyword id="KW-0238">DNA-binding</keyword>
<keyword id="KW-1185">Reference proteome</keyword>
<keyword id="KW-0678">Repressor</keyword>
<keyword id="KW-0804">Transcription</keyword>
<keyword id="KW-0805">Transcription regulation</keyword>
<protein>
    <recommendedName>
        <fullName evidence="1">Global transcriptional regulator CodY</fullName>
    </recommendedName>
</protein>